<organism>
    <name type="scientific">Chromobacterium violaceum (strain ATCC 12472 / DSM 30191 / JCM 1249 / CCUG 213 / NBRC 12614 / NCIMB 9131 / NCTC 9757 / MK)</name>
    <dbReference type="NCBI Taxonomy" id="243365"/>
    <lineage>
        <taxon>Bacteria</taxon>
        <taxon>Pseudomonadati</taxon>
        <taxon>Pseudomonadota</taxon>
        <taxon>Betaproteobacteria</taxon>
        <taxon>Neisseriales</taxon>
        <taxon>Chromobacteriaceae</taxon>
        <taxon>Chromobacterium</taxon>
    </lineage>
</organism>
<evidence type="ECO:0000255" key="1">
    <source>
        <dbReference type="HAMAP-Rule" id="MF_00230"/>
    </source>
</evidence>
<proteinExistence type="inferred from homology"/>
<protein>
    <recommendedName>
        <fullName evidence="1">Nicotinate-nucleotide--dimethylbenzimidazole phosphoribosyltransferase</fullName>
        <shortName evidence="1">NN:DBI PRT</shortName>
        <ecNumber evidence="1">2.4.2.21</ecNumber>
    </recommendedName>
    <alternativeName>
        <fullName evidence="1">N(1)-alpha-phosphoribosyltransferase</fullName>
    </alternativeName>
</protein>
<reference key="1">
    <citation type="journal article" date="2003" name="Proc. Natl. Acad. Sci. U.S.A.">
        <title>The complete genome sequence of Chromobacterium violaceum reveals remarkable and exploitable bacterial adaptability.</title>
        <authorList>
            <person name="Vasconcelos A.T.R."/>
            <person name="de Almeida D.F."/>
            <person name="Hungria M."/>
            <person name="Guimaraes C.T."/>
            <person name="Antonio R.V."/>
            <person name="Almeida F.C."/>
            <person name="de Almeida L.G.P."/>
            <person name="de Almeida R."/>
            <person name="Alves-Gomes J.A."/>
            <person name="Andrade E.M."/>
            <person name="Araripe J."/>
            <person name="de Araujo M.F.F."/>
            <person name="Astolfi-Filho S."/>
            <person name="Azevedo V."/>
            <person name="Baptista A.J."/>
            <person name="Bataus L.A.M."/>
            <person name="Batista J.S."/>
            <person name="Belo A."/>
            <person name="van den Berg C."/>
            <person name="Bogo M."/>
            <person name="Bonatto S."/>
            <person name="Bordignon J."/>
            <person name="Brigido M.M."/>
            <person name="Brito C.A."/>
            <person name="Brocchi M."/>
            <person name="Burity H.A."/>
            <person name="Camargo A.A."/>
            <person name="Cardoso D.D.P."/>
            <person name="Carneiro N.P."/>
            <person name="Carraro D.M."/>
            <person name="Carvalho C.M.B."/>
            <person name="Cascardo J.C.M."/>
            <person name="Cavada B.S."/>
            <person name="Chueire L.M.O."/>
            <person name="Creczynski-Pasa T.B."/>
            <person name="Cunha-Junior N.C."/>
            <person name="Fagundes N."/>
            <person name="Falcao C.L."/>
            <person name="Fantinatti F."/>
            <person name="Farias I.P."/>
            <person name="Felipe M.S.S."/>
            <person name="Ferrari L.P."/>
            <person name="Ferro J.A."/>
            <person name="Ferro M.I.T."/>
            <person name="Franco G.R."/>
            <person name="Freitas N.S.A."/>
            <person name="Furlan L.R."/>
            <person name="Gazzinelli R.T."/>
            <person name="Gomes E.A."/>
            <person name="Goncalves P.R."/>
            <person name="Grangeiro T.B."/>
            <person name="Grattapaglia D."/>
            <person name="Grisard E.C."/>
            <person name="Hanna E.S."/>
            <person name="Jardim S.N."/>
            <person name="Laurino J."/>
            <person name="Leoi L.C.T."/>
            <person name="Lima L.F.A."/>
            <person name="Loureiro M.F."/>
            <person name="Lyra M.C.C.P."/>
            <person name="Madeira H.M.F."/>
            <person name="Manfio G.P."/>
            <person name="Maranhao A.Q."/>
            <person name="Martins W.S."/>
            <person name="di Mauro S.M.Z."/>
            <person name="de Medeiros S.R.B."/>
            <person name="Meissner R.V."/>
            <person name="Moreira M.A.M."/>
            <person name="Nascimento F.F."/>
            <person name="Nicolas M.F."/>
            <person name="Oliveira J.G."/>
            <person name="Oliveira S.C."/>
            <person name="Paixao R.F.C."/>
            <person name="Parente J.A."/>
            <person name="Pedrosa F.O."/>
            <person name="Pena S.D.J."/>
            <person name="Pereira J.O."/>
            <person name="Pereira M."/>
            <person name="Pinto L.S.R.C."/>
            <person name="Pinto L.S."/>
            <person name="Porto J.I.R."/>
            <person name="Potrich D.P."/>
            <person name="Ramalho-Neto C.E."/>
            <person name="Reis A.M.M."/>
            <person name="Rigo L.U."/>
            <person name="Rondinelli E."/>
            <person name="Santos E.B.P."/>
            <person name="Santos F.R."/>
            <person name="Schneider M.P.C."/>
            <person name="Seuanez H.N."/>
            <person name="Silva A.M.R."/>
            <person name="da Silva A.L.C."/>
            <person name="Silva D.W."/>
            <person name="Silva R."/>
            <person name="Simoes I.C."/>
            <person name="Simon D."/>
            <person name="Soares C.M.A."/>
            <person name="Soares R.B.A."/>
            <person name="Souza E.M."/>
            <person name="Souza K.R.L."/>
            <person name="Souza R.C."/>
            <person name="Steffens M.B.R."/>
            <person name="Steindel M."/>
            <person name="Teixeira S.R."/>
            <person name="Urmenyi T."/>
            <person name="Vettore A."/>
            <person name="Wassem R."/>
            <person name="Zaha A."/>
            <person name="Simpson A.J.G."/>
        </authorList>
    </citation>
    <scope>NUCLEOTIDE SEQUENCE [LARGE SCALE GENOMIC DNA]</scope>
    <source>
        <strain>ATCC 12472 / DSM 30191 / JCM 1249 / CCUG 213 / NBRC 12614 / NCIMB 9131 / NCTC 9757 / MK</strain>
    </source>
</reference>
<feature type="chain" id="PRO_0000167041" description="Nicotinate-nucleotide--dimethylbenzimidazole phosphoribosyltransferase">
    <location>
        <begin position="1"/>
        <end position="344"/>
    </location>
</feature>
<feature type="active site" description="Proton acceptor" evidence="1">
    <location>
        <position position="310"/>
    </location>
</feature>
<name>COBT_CHRVO</name>
<comment type="function">
    <text evidence="1">Catalyzes the synthesis of alpha-ribazole-5'-phosphate from nicotinate mononucleotide (NAMN) and 5,6-dimethylbenzimidazole (DMB).</text>
</comment>
<comment type="catalytic activity">
    <reaction evidence="1">
        <text>5,6-dimethylbenzimidazole + nicotinate beta-D-ribonucleotide = alpha-ribazole 5'-phosphate + nicotinate + H(+)</text>
        <dbReference type="Rhea" id="RHEA:11196"/>
        <dbReference type="ChEBI" id="CHEBI:15378"/>
        <dbReference type="ChEBI" id="CHEBI:15890"/>
        <dbReference type="ChEBI" id="CHEBI:32544"/>
        <dbReference type="ChEBI" id="CHEBI:57502"/>
        <dbReference type="ChEBI" id="CHEBI:57918"/>
        <dbReference type="EC" id="2.4.2.21"/>
    </reaction>
</comment>
<comment type="pathway">
    <text evidence="1">Nucleoside biosynthesis; alpha-ribazole biosynthesis; alpha-ribazole from 5,6-dimethylbenzimidazole: step 1/2.</text>
</comment>
<comment type="similarity">
    <text evidence="1">Belongs to the CobT family.</text>
</comment>
<keyword id="KW-0169">Cobalamin biosynthesis</keyword>
<keyword id="KW-0328">Glycosyltransferase</keyword>
<keyword id="KW-1185">Reference proteome</keyword>
<keyword id="KW-0808">Transferase</keyword>
<gene>
    <name evidence="1" type="primary">cobT</name>
    <name type="ordered locus">CV_0493</name>
</gene>
<accession>Q7P0S3</accession>
<dbReference type="EC" id="2.4.2.21" evidence="1"/>
<dbReference type="EMBL" id="AE016825">
    <property type="protein sequence ID" value="AAQ58170.1"/>
    <property type="molecule type" value="Genomic_DNA"/>
</dbReference>
<dbReference type="RefSeq" id="WP_011134048.1">
    <property type="nucleotide sequence ID" value="NC_005085.1"/>
</dbReference>
<dbReference type="SMR" id="Q7P0S3"/>
<dbReference type="STRING" id="243365.CV_0493"/>
<dbReference type="GeneID" id="66365595"/>
<dbReference type="KEGG" id="cvi:CV_0493"/>
<dbReference type="eggNOG" id="COG2038">
    <property type="taxonomic scope" value="Bacteria"/>
</dbReference>
<dbReference type="HOGENOM" id="CLU_002982_0_0_4"/>
<dbReference type="OrthoDB" id="9781491at2"/>
<dbReference type="UniPathway" id="UPA00061">
    <property type="reaction ID" value="UER00516"/>
</dbReference>
<dbReference type="Proteomes" id="UP000001424">
    <property type="component" value="Chromosome"/>
</dbReference>
<dbReference type="GO" id="GO:0008939">
    <property type="term" value="F:nicotinate-nucleotide-dimethylbenzimidazole phosphoribosyltransferase activity"/>
    <property type="evidence" value="ECO:0007669"/>
    <property type="project" value="UniProtKB-UniRule"/>
</dbReference>
<dbReference type="GO" id="GO:0009236">
    <property type="term" value="P:cobalamin biosynthetic process"/>
    <property type="evidence" value="ECO:0007669"/>
    <property type="project" value="UniProtKB-KW"/>
</dbReference>
<dbReference type="CDD" id="cd02439">
    <property type="entry name" value="DMB-PRT_CobT"/>
    <property type="match status" value="1"/>
</dbReference>
<dbReference type="FunFam" id="3.40.50.10210:FF:000001">
    <property type="entry name" value="Nicotinate-nucleotide--dimethylbenzimidazole phosphoribosyltransferase"/>
    <property type="match status" value="1"/>
</dbReference>
<dbReference type="Gene3D" id="1.10.1610.10">
    <property type="match status" value="1"/>
</dbReference>
<dbReference type="Gene3D" id="3.40.50.10210">
    <property type="match status" value="1"/>
</dbReference>
<dbReference type="HAMAP" id="MF_00230">
    <property type="entry name" value="CobT"/>
    <property type="match status" value="1"/>
</dbReference>
<dbReference type="InterPro" id="IPR003200">
    <property type="entry name" value="Nict_dMeBzImd_PRibTrfase"/>
</dbReference>
<dbReference type="InterPro" id="IPR017846">
    <property type="entry name" value="Nict_dMeBzImd_PRibTrfase_bact"/>
</dbReference>
<dbReference type="InterPro" id="IPR023195">
    <property type="entry name" value="Nict_dMeBzImd_PRibTrfase_N"/>
</dbReference>
<dbReference type="InterPro" id="IPR036087">
    <property type="entry name" value="Nict_dMeBzImd_PRibTrfase_sf"/>
</dbReference>
<dbReference type="NCBIfam" id="TIGR03160">
    <property type="entry name" value="cobT_DBIPRT"/>
    <property type="match status" value="1"/>
</dbReference>
<dbReference type="NCBIfam" id="NF000996">
    <property type="entry name" value="PRK00105.1"/>
    <property type="match status" value="1"/>
</dbReference>
<dbReference type="PANTHER" id="PTHR43463">
    <property type="entry name" value="NICOTINATE-NUCLEOTIDE--DIMETHYLBENZIMIDAZOLE PHOSPHORIBOSYLTRANSFERASE"/>
    <property type="match status" value="1"/>
</dbReference>
<dbReference type="PANTHER" id="PTHR43463:SF1">
    <property type="entry name" value="NICOTINATE-NUCLEOTIDE--DIMETHYLBENZIMIDAZOLE PHOSPHORIBOSYLTRANSFERASE"/>
    <property type="match status" value="1"/>
</dbReference>
<dbReference type="Pfam" id="PF02277">
    <property type="entry name" value="DBI_PRT"/>
    <property type="match status" value="1"/>
</dbReference>
<dbReference type="SUPFAM" id="SSF52733">
    <property type="entry name" value="Nicotinate mononucleotide:5,6-dimethylbenzimidazole phosphoribosyltransferase (CobT)"/>
    <property type="match status" value="1"/>
</dbReference>
<sequence>MNSSKPLDLSARNAARARQAVLTKPPGSLGQLEELACRFAAWQGRAQPEDLRPAITVFAADHGVTVEGVSAFPSAVTTEMVRNFANGGAAICVLARALDARLEVVDVGVAGDVSALPIVHAKVRPGSHNLARQAAMSAEETEAALEAGRAAARRAVEAGANLLVAGDMGIGNTTASAALICRLTGAAPELVVGRGTGVDDAGLANKRRAVKTALARVAWENLSGLDTLSELGGLEIAAIAGFYLEGARLGVPSLVDGFIASAAALCAKTIDPSLHDWLLASHRSAESGHELALTALQLHPLVDLGMRLGEGSGAAVCVPLLQLAVKLHNGMATFDEAGVSGKSA</sequence>